<protein>
    <recommendedName>
        <fullName evidence="1">Glycine--tRNA ligase alpha subunit</fullName>
        <ecNumber evidence="1">6.1.1.14</ecNumber>
    </recommendedName>
    <alternativeName>
        <fullName evidence="1">Glycyl-tRNA synthetase alpha subunit</fullName>
        <shortName evidence="1">GlyRS</shortName>
    </alternativeName>
</protein>
<sequence length="315" mass="36104">MSQNKPAVRTFQDLILALQNYWAEQGCVVLQPYDMEVGAGTFHTATFLRAVGPETWNAAYVQPSRRPTDGRYGENPNRLQHYYQFQVVLKPNPENFQELYLGSLKAIGLDPEVHDIRFVEDNWESPTLGAWGLGWEIWLNGMEVTQFTYFQQVGGIECYPVTGEITYGLERLAMYLQGVDSVYDLIWTDGPFGTVTYGDVFHQNEVEQSTYNFEHANVEKLFELFDFYESEANRLIELELPLPTYEMVLKASHTFNLLDARRAISVTARQQYILRVRTLARAVAQSYLQARAKLGFPMATPELRDEVLAKLEAQA</sequence>
<reference key="1">
    <citation type="submission" date="2007-04" db="EMBL/GenBank/DDBJ databases">
        <title>Complete sequence of Pseudomonas mendocina ymp.</title>
        <authorList>
            <consortium name="US DOE Joint Genome Institute"/>
            <person name="Copeland A."/>
            <person name="Lucas S."/>
            <person name="Lapidus A."/>
            <person name="Barry K."/>
            <person name="Glavina del Rio T."/>
            <person name="Dalin E."/>
            <person name="Tice H."/>
            <person name="Pitluck S."/>
            <person name="Kiss H."/>
            <person name="Brettin T."/>
            <person name="Detter J.C."/>
            <person name="Bruce D."/>
            <person name="Han C."/>
            <person name="Schmutz J."/>
            <person name="Larimer F."/>
            <person name="Land M."/>
            <person name="Hauser L."/>
            <person name="Kyrpides N."/>
            <person name="Mikhailova N."/>
            <person name="Hersman L."/>
            <person name="Dubois J."/>
            <person name="Maurice P."/>
            <person name="Richardson P."/>
        </authorList>
    </citation>
    <scope>NUCLEOTIDE SEQUENCE [LARGE SCALE GENOMIC DNA]</scope>
    <source>
        <strain>ymp</strain>
    </source>
</reference>
<proteinExistence type="inferred from homology"/>
<organism>
    <name type="scientific">Ectopseudomonas mendocina (strain ymp)</name>
    <name type="common">Pseudomonas mendocina</name>
    <dbReference type="NCBI Taxonomy" id="399739"/>
    <lineage>
        <taxon>Bacteria</taxon>
        <taxon>Pseudomonadati</taxon>
        <taxon>Pseudomonadota</taxon>
        <taxon>Gammaproteobacteria</taxon>
        <taxon>Pseudomonadales</taxon>
        <taxon>Pseudomonadaceae</taxon>
        <taxon>Ectopseudomonas</taxon>
    </lineage>
</organism>
<accession>A4XN73</accession>
<name>SYGA_ECTM1</name>
<keyword id="KW-0030">Aminoacyl-tRNA synthetase</keyword>
<keyword id="KW-0067">ATP-binding</keyword>
<keyword id="KW-0963">Cytoplasm</keyword>
<keyword id="KW-0436">Ligase</keyword>
<keyword id="KW-0547">Nucleotide-binding</keyword>
<keyword id="KW-0648">Protein biosynthesis</keyword>
<dbReference type="EC" id="6.1.1.14" evidence="1"/>
<dbReference type="EMBL" id="CP000680">
    <property type="protein sequence ID" value="ABP82789.1"/>
    <property type="molecule type" value="Genomic_DNA"/>
</dbReference>
<dbReference type="SMR" id="A4XN73"/>
<dbReference type="STRING" id="399739.Pmen_0014"/>
<dbReference type="KEGG" id="pmy:Pmen_0014"/>
<dbReference type="PATRIC" id="fig|399739.8.peg.15"/>
<dbReference type="eggNOG" id="COG0752">
    <property type="taxonomic scope" value="Bacteria"/>
</dbReference>
<dbReference type="HOGENOM" id="CLU_057066_1_0_6"/>
<dbReference type="OrthoDB" id="9802183at2"/>
<dbReference type="GO" id="GO:0005829">
    <property type="term" value="C:cytosol"/>
    <property type="evidence" value="ECO:0007669"/>
    <property type="project" value="TreeGrafter"/>
</dbReference>
<dbReference type="GO" id="GO:0005524">
    <property type="term" value="F:ATP binding"/>
    <property type="evidence" value="ECO:0007669"/>
    <property type="project" value="UniProtKB-UniRule"/>
</dbReference>
<dbReference type="GO" id="GO:0004820">
    <property type="term" value="F:glycine-tRNA ligase activity"/>
    <property type="evidence" value="ECO:0007669"/>
    <property type="project" value="UniProtKB-UniRule"/>
</dbReference>
<dbReference type="GO" id="GO:0006426">
    <property type="term" value="P:glycyl-tRNA aminoacylation"/>
    <property type="evidence" value="ECO:0007669"/>
    <property type="project" value="UniProtKB-UniRule"/>
</dbReference>
<dbReference type="CDD" id="cd00733">
    <property type="entry name" value="GlyRS_alpha_core"/>
    <property type="match status" value="1"/>
</dbReference>
<dbReference type="FunFam" id="3.30.930.10:FF:000006">
    <property type="entry name" value="Glycine--tRNA ligase alpha subunit"/>
    <property type="match status" value="1"/>
</dbReference>
<dbReference type="Gene3D" id="3.30.930.10">
    <property type="entry name" value="Bira Bifunctional Protein, Domain 2"/>
    <property type="match status" value="1"/>
</dbReference>
<dbReference type="Gene3D" id="1.20.58.180">
    <property type="entry name" value="Class II aaRS and biotin synthetases, domain 2"/>
    <property type="match status" value="1"/>
</dbReference>
<dbReference type="HAMAP" id="MF_00254">
    <property type="entry name" value="Gly_tRNA_synth_alpha"/>
    <property type="match status" value="1"/>
</dbReference>
<dbReference type="InterPro" id="IPR045864">
    <property type="entry name" value="aa-tRNA-synth_II/BPL/LPL"/>
</dbReference>
<dbReference type="InterPro" id="IPR006194">
    <property type="entry name" value="Gly-tRNA-synth_heterodimer"/>
</dbReference>
<dbReference type="InterPro" id="IPR002310">
    <property type="entry name" value="Gly-tRNA_ligase_asu"/>
</dbReference>
<dbReference type="NCBIfam" id="TIGR00388">
    <property type="entry name" value="glyQ"/>
    <property type="match status" value="1"/>
</dbReference>
<dbReference type="NCBIfam" id="NF006827">
    <property type="entry name" value="PRK09348.1"/>
    <property type="match status" value="1"/>
</dbReference>
<dbReference type="PANTHER" id="PTHR30075:SF2">
    <property type="entry name" value="GLYCINE--TRNA LIGASE, CHLOROPLASTIC_MITOCHONDRIAL 2"/>
    <property type="match status" value="1"/>
</dbReference>
<dbReference type="PANTHER" id="PTHR30075">
    <property type="entry name" value="GLYCYL-TRNA SYNTHETASE"/>
    <property type="match status" value="1"/>
</dbReference>
<dbReference type="Pfam" id="PF02091">
    <property type="entry name" value="tRNA-synt_2e"/>
    <property type="match status" value="1"/>
</dbReference>
<dbReference type="PRINTS" id="PR01044">
    <property type="entry name" value="TRNASYNTHGA"/>
</dbReference>
<dbReference type="SUPFAM" id="SSF55681">
    <property type="entry name" value="Class II aaRS and biotin synthetases"/>
    <property type="match status" value="1"/>
</dbReference>
<dbReference type="PROSITE" id="PS50861">
    <property type="entry name" value="AA_TRNA_LIGASE_II_GLYAB"/>
    <property type="match status" value="1"/>
</dbReference>
<evidence type="ECO:0000255" key="1">
    <source>
        <dbReference type="HAMAP-Rule" id="MF_00254"/>
    </source>
</evidence>
<feature type="chain" id="PRO_1000047472" description="Glycine--tRNA ligase alpha subunit">
    <location>
        <begin position="1"/>
        <end position="315"/>
    </location>
</feature>
<gene>
    <name evidence="1" type="primary">glyQ</name>
    <name type="ordered locus">Pmen_0014</name>
</gene>
<comment type="catalytic activity">
    <reaction evidence="1">
        <text>tRNA(Gly) + glycine + ATP = glycyl-tRNA(Gly) + AMP + diphosphate</text>
        <dbReference type="Rhea" id="RHEA:16013"/>
        <dbReference type="Rhea" id="RHEA-COMP:9664"/>
        <dbReference type="Rhea" id="RHEA-COMP:9683"/>
        <dbReference type="ChEBI" id="CHEBI:30616"/>
        <dbReference type="ChEBI" id="CHEBI:33019"/>
        <dbReference type="ChEBI" id="CHEBI:57305"/>
        <dbReference type="ChEBI" id="CHEBI:78442"/>
        <dbReference type="ChEBI" id="CHEBI:78522"/>
        <dbReference type="ChEBI" id="CHEBI:456215"/>
        <dbReference type="EC" id="6.1.1.14"/>
    </reaction>
</comment>
<comment type="subunit">
    <text evidence="1">Tetramer of two alpha and two beta subunits.</text>
</comment>
<comment type="subcellular location">
    <subcellularLocation>
        <location evidence="1">Cytoplasm</location>
    </subcellularLocation>
</comment>
<comment type="similarity">
    <text evidence="1">Belongs to the class-II aminoacyl-tRNA synthetase family.</text>
</comment>